<dbReference type="EC" id="4.1.1.39"/>
<dbReference type="EMBL" id="U05606">
    <property type="protein sequence ID" value="AAA19890.1"/>
    <property type="molecule type" value="Genomic_DNA"/>
</dbReference>
<dbReference type="SMR" id="P43226"/>
<dbReference type="GO" id="GO:0009507">
    <property type="term" value="C:chloroplast"/>
    <property type="evidence" value="ECO:0007669"/>
    <property type="project" value="UniProtKB-SubCell"/>
</dbReference>
<dbReference type="GO" id="GO:0000287">
    <property type="term" value="F:magnesium ion binding"/>
    <property type="evidence" value="ECO:0007669"/>
    <property type="project" value="InterPro"/>
</dbReference>
<dbReference type="GO" id="GO:0004497">
    <property type="term" value="F:monooxygenase activity"/>
    <property type="evidence" value="ECO:0007669"/>
    <property type="project" value="UniProtKB-KW"/>
</dbReference>
<dbReference type="GO" id="GO:0016984">
    <property type="term" value="F:ribulose-bisphosphate carboxylase activity"/>
    <property type="evidence" value="ECO:0007669"/>
    <property type="project" value="UniProtKB-EC"/>
</dbReference>
<dbReference type="GO" id="GO:0009853">
    <property type="term" value="P:photorespiration"/>
    <property type="evidence" value="ECO:0007669"/>
    <property type="project" value="UniProtKB-KW"/>
</dbReference>
<dbReference type="GO" id="GO:0019253">
    <property type="term" value="P:reductive pentose-phosphate cycle"/>
    <property type="evidence" value="ECO:0007669"/>
    <property type="project" value="UniProtKB-KW"/>
</dbReference>
<dbReference type="FunFam" id="3.20.20.110:FF:000003">
    <property type="entry name" value="Ribulose bisphosphate carboxylase large chain"/>
    <property type="match status" value="1"/>
</dbReference>
<dbReference type="Gene3D" id="3.20.20.110">
    <property type="entry name" value="Ribulose bisphosphate carboxylase, large subunit, C-terminal domain"/>
    <property type="match status" value="1"/>
</dbReference>
<dbReference type="Gene3D" id="3.30.70.150">
    <property type="entry name" value="RuBisCO large subunit, N-terminal domain"/>
    <property type="match status" value="1"/>
</dbReference>
<dbReference type="InterPro" id="IPR033966">
    <property type="entry name" value="RuBisCO"/>
</dbReference>
<dbReference type="InterPro" id="IPR020878">
    <property type="entry name" value="RuBisCo_large_chain_AS"/>
</dbReference>
<dbReference type="InterPro" id="IPR000685">
    <property type="entry name" value="RuBisCO_lsu_C"/>
</dbReference>
<dbReference type="InterPro" id="IPR036376">
    <property type="entry name" value="RuBisCO_lsu_C_sf"/>
</dbReference>
<dbReference type="InterPro" id="IPR017443">
    <property type="entry name" value="RuBisCO_lsu_fd_N"/>
</dbReference>
<dbReference type="InterPro" id="IPR036422">
    <property type="entry name" value="RuBisCO_lsu_N_sf"/>
</dbReference>
<dbReference type="NCBIfam" id="NF003252">
    <property type="entry name" value="PRK04208.1"/>
    <property type="match status" value="1"/>
</dbReference>
<dbReference type="PANTHER" id="PTHR42704">
    <property type="entry name" value="RIBULOSE BISPHOSPHATE CARBOXYLASE"/>
    <property type="match status" value="1"/>
</dbReference>
<dbReference type="PANTHER" id="PTHR42704:SF17">
    <property type="entry name" value="RIBULOSE BISPHOSPHATE CARBOXYLASE LARGE CHAIN"/>
    <property type="match status" value="1"/>
</dbReference>
<dbReference type="Pfam" id="PF00016">
    <property type="entry name" value="RuBisCO_large"/>
    <property type="match status" value="1"/>
</dbReference>
<dbReference type="Pfam" id="PF02788">
    <property type="entry name" value="RuBisCO_large_N"/>
    <property type="match status" value="1"/>
</dbReference>
<dbReference type="SFLD" id="SFLDG01052">
    <property type="entry name" value="RuBisCO"/>
    <property type="match status" value="1"/>
</dbReference>
<dbReference type="SFLD" id="SFLDS00014">
    <property type="entry name" value="RuBisCO"/>
    <property type="match status" value="1"/>
</dbReference>
<dbReference type="SFLD" id="SFLDG00301">
    <property type="entry name" value="RuBisCO-like_proteins"/>
    <property type="match status" value="1"/>
</dbReference>
<dbReference type="SUPFAM" id="SSF51649">
    <property type="entry name" value="RuBisCo, C-terminal domain"/>
    <property type="match status" value="1"/>
</dbReference>
<dbReference type="SUPFAM" id="SSF54966">
    <property type="entry name" value="RuBisCO, large subunit, small (N-terminal) domain"/>
    <property type="match status" value="1"/>
</dbReference>
<dbReference type="PROSITE" id="PS00157">
    <property type="entry name" value="RUBISCO_LARGE"/>
    <property type="match status" value="1"/>
</dbReference>
<name>RBL_BLEOR</name>
<feature type="chain" id="PRO_0000062378" description="Ribulose bisphosphate carboxylase large chain">
    <location>
        <begin position="1" status="less than"/>
        <end position="414" status="greater than"/>
    </location>
</feature>
<feature type="active site" description="Proton acceptor" evidence="1">
    <location>
        <position position="152"/>
    </location>
</feature>
<feature type="active site" description="Proton acceptor" evidence="1">
    <location>
        <position position="271"/>
    </location>
</feature>
<feature type="binding site" description="in homodimeric partner" evidence="1">
    <location>
        <position position="100"/>
    </location>
    <ligand>
        <name>substrate</name>
    </ligand>
</feature>
<feature type="binding site" evidence="1">
    <location>
        <position position="150"/>
    </location>
    <ligand>
        <name>substrate</name>
    </ligand>
</feature>
<feature type="binding site" evidence="1">
    <location>
        <position position="154"/>
    </location>
    <ligand>
        <name>substrate</name>
    </ligand>
</feature>
<feature type="binding site" description="via carbamate group" evidence="2">
    <location>
        <position position="178"/>
    </location>
    <ligand>
        <name>Mg(2+)</name>
        <dbReference type="ChEBI" id="CHEBI:18420"/>
    </ligand>
</feature>
<feature type="binding site" evidence="2">
    <location>
        <position position="180"/>
    </location>
    <ligand>
        <name>Mg(2+)</name>
        <dbReference type="ChEBI" id="CHEBI:18420"/>
    </ligand>
</feature>
<feature type="binding site" evidence="2">
    <location>
        <position position="181"/>
    </location>
    <ligand>
        <name>Mg(2+)</name>
        <dbReference type="ChEBI" id="CHEBI:18420"/>
    </ligand>
</feature>
<feature type="binding site" evidence="1">
    <location>
        <position position="272"/>
    </location>
    <ligand>
        <name>substrate</name>
    </ligand>
</feature>
<feature type="binding site" evidence="1">
    <location>
        <position position="304"/>
    </location>
    <ligand>
        <name>substrate</name>
    </ligand>
</feature>
<feature type="binding site" evidence="1">
    <location>
        <position position="356"/>
    </location>
    <ligand>
        <name>substrate</name>
    </ligand>
</feature>
<feature type="site" description="Transition state stabilizer" evidence="1">
    <location>
        <position position="311"/>
    </location>
</feature>
<feature type="modified residue" description="N6-carboxylysine" evidence="2">
    <location>
        <position position="178"/>
    </location>
</feature>
<feature type="disulfide bond" description="Interchain; in linked form" evidence="1">
    <location>
        <position position="224"/>
    </location>
</feature>
<feature type="non-terminal residue">
    <location>
        <position position="1"/>
    </location>
</feature>
<feature type="non-terminal residue">
    <location>
        <position position="414"/>
    </location>
</feature>
<reference key="1">
    <citation type="journal article" date="1994" name="Proc. Natl. Acad. Sci. U.S.A.">
        <title>rbcL gene sequences provide evidence for the evolutionary lineages of leptosporangiate ferns.</title>
        <authorList>
            <person name="Hasebe M."/>
            <person name="Omori T."/>
            <person name="Nakazawa M."/>
            <person name="Sano T."/>
            <person name="Kato M."/>
            <person name="Iwatsuki K."/>
        </authorList>
    </citation>
    <scope>NUCLEOTIDE SEQUENCE [GENOMIC DNA]</scope>
    <source>
        <tissue>Leaf</tissue>
    </source>
</reference>
<accession>P43226</accession>
<comment type="function">
    <text evidence="1">RuBisCO catalyzes two reactions: the carboxylation of D-ribulose 1,5-bisphosphate, the primary event in carbon dioxide fixation, as well as the oxidative fragmentation of the pentose substrate in the photorespiration process. Both reactions occur simultaneously and in competition at the same active site (By similarity).</text>
</comment>
<comment type="catalytic activity">
    <reaction>
        <text>2 (2R)-3-phosphoglycerate + 2 H(+) = D-ribulose 1,5-bisphosphate + CO2 + H2O</text>
        <dbReference type="Rhea" id="RHEA:23124"/>
        <dbReference type="ChEBI" id="CHEBI:15377"/>
        <dbReference type="ChEBI" id="CHEBI:15378"/>
        <dbReference type="ChEBI" id="CHEBI:16526"/>
        <dbReference type="ChEBI" id="CHEBI:57870"/>
        <dbReference type="ChEBI" id="CHEBI:58272"/>
        <dbReference type="EC" id="4.1.1.39"/>
    </reaction>
</comment>
<comment type="catalytic activity">
    <reaction>
        <text>D-ribulose 1,5-bisphosphate + O2 = 2-phosphoglycolate + (2R)-3-phosphoglycerate + 2 H(+)</text>
        <dbReference type="Rhea" id="RHEA:36631"/>
        <dbReference type="ChEBI" id="CHEBI:15378"/>
        <dbReference type="ChEBI" id="CHEBI:15379"/>
        <dbReference type="ChEBI" id="CHEBI:57870"/>
        <dbReference type="ChEBI" id="CHEBI:58033"/>
        <dbReference type="ChEBI" id="CHEBI:58272"/>
    </reaction>
</comment>
<comment type="cofactor">
    <cofactor evidence="1">
        <name>Mg(2+)</name>
        <dbReference type="ChEBI" id="CHEBI:18420"/>
    </cofactor>
    <text evidence="1">Binds 1 Mg(2+) ion per subunit.</text>
</comment>
<comment type="subunit">
    <text evidence="1">Heterohexadecamer of 8 large chains and 8 small chains; disulfide-linked. The disulfide link is formed within the large subunit homodimers (By similarity).</text>
</comment>
<comment type="subcellular location">
    <subcellularLocation>
        <location>Plastid</location>
        <location>Chloroplast</location>
    </subcellularLocation>
</comment>
<comment type="PTM">
    <text evidence="1">The disulfide bond which can form in the large chain dimeric partners within the hexadecamer appears to be associated with oxidative stress and protein turnover.</text>
</comment>
<comment type="miscellaneous">
    <text evidence="1">The basic functional RuBisCO is composed of a large chain homodimer in a 'head-to-tail' conformation. In form I RuBisCO this homodimer is arranged in a barrel-like tetramer with the small subunits forming a tetrameric 'cap' on each end of the 'barrel' (By similarity).</text>
</comment>
<comment type="similarity">
    <text evidence="3">Belongs to the RuBisCO large chain family. Type I subfamily.</text>
</comment>
<sequence>YYTPDYKTKDTDILAAFRMTPQPGVPAEEAGAAVAAESSTGTWTTVWTDGLTSLDRYKGRCYDIEPVAGEENQYIAYVAYPLDLFEEGSVTNLFTSIVGNVFGFKALRALRLEDLRIPPAYSKTFIGPPHGIQVERDKLNKYGRPLLGCTIKPKLGLSAKNYGRAVYECLRGGLDFTKDDENVNSQPFMRWRDRFLFVAEALFKSQAETGEIKGHYLNATAGTCEEMLKRAVFARELGAPIVMHDYLTGGFTANTSLAFYCRDNGLLLHIHRAMHAVIDRQRNHGMHFRVLAKALRMSGGDHIHAGTVVGKLEGEREVTLGFVDLLRDDYIEKDRCRGIYFTQDWVSMPGVLPVASGGIHVWHMPALTEIFGDDSVLQFGGGTLGHPWGNAPGAVANRVALEACVQARNEGPNL</sequence>
<protein>
    <recommendedName>
        <fullName>Ribulose bisphosphate carboxylase large chain</fullName>
        <shortName>RuBisCO large subunit</shortName>
        <ecNumber>4.1.1.39</ecNumber>
    </recommendedName>
</protein>
<organism>
    <name type="scientific">Blechnopsis orientalis</name>
    <name type="common">Fish fern</name>
    <name type="synonym">Blechnum orientale</name>
    <dbReference type="NCBI Taxonomy" id="29606"/>
    <lineage>
        <taxon>Eukaryota</taxon>
        <taxon>Viridiplantae</taxon>
        <taxon>Streptophyta</taxon>
        <taxon>Embryophyta</taxon>
        <taxon>Tracheophyta</taxon>
        <taxon>Polypodiopsida</taxon>
        <taxon>Polypodiidae</taxon>
        <taxon>Polypodiales</taxon>
        <taxon>Aspleniineae</taxon>
        <taxon>Blechnaceae</taxon>
        <taxon>Blechnoideae</taxon>
        <taxon>Blechnopsis</taxon>
    </lineage>
</organism>
<keyword id="KW-0113">Calvin cycle</keyword>
<keyword id="KW-0120">Carbon dioxide fixation</keyword>
<keyword id="KW-0150">Chloroplast</keyword>
<keyword id="KW-1015">Disulfide bond</keyword>
<keyword id="KW-0456">Lyase</keyword>
<keyword id="KW-0460">Magnesium</keyword>
<keyword id="KW-0479">Metal-binding</keyword>
<keyword id="KW-0503">Monooxygenase</keyword>
<keyword id="KW-0560">Oxidoreductase</keyword>
<keyword id="KW-0601">Photorespiration</keyword>
<keyword id="KW-0602">Photosynthesis</keyword>
<keyword id="KW-0934">Plastid</keyword>
<geneLocation type="chloroplast"/>
<proteinExistence type="inferred from homology"/>
<evidence type="ECO:0000250" key="1"/>
<evidence type="ECO:0000255" key="2">
    <source>
        <dbReference type="PROSITE-ProRule" id="PRU10114"/>
    </source>
</evidence>
<evidence type="ECO:0000305" key="3"/>
<gene>
    <name type="primary">rbcL</name>
</gene>